<organism>
    <name type="scientific">Xenopus tropicalis</name>
    <name type="common">Western clawed frog</name>
    <name type="synonym">Silurana tropicalis</name>
    <dbReference type="NCBI Taxonomy" id="8364"/>
    <lineage>
        <taxon>Eukaryota</taxon>
        <taxon>Metazoa</taxon>
        <taxon>Chordata</taxon>
        <taxon>Craniata</taxon>
        <taxon>Vertebrata</taxon>
        <taxon>Euteleostomi</taxon>
        <taxon>Amphibia</taxon>
        <taxon>Batrachia</taxon>
        <taxon>Anura</taxon>
        <taxon>Pipoidea</taxon>
        <taxon>Pipidae</taxon>
        <taxon>Xenopodinae</taxon>
        <taxon>Xenopus</taxon>
        <taxon>Silurana</taxon>
    </lineage>
</organism>
<dbReference type="EMBL" id="BC084916">
    <property type="protein sequence ID" value="AAH84916.1"/>
    <property type="molecule type" value="mRNA"/>
</dbReference>
<dbReference type="RefSeq" id="NP_001011160.1">
    <property type="nucleotide sequence ID" value="NM_001011160.1"/>
</dbReference>
<dbReference type="RefSeq" id="XP_012820042.1">
    <property type="nucleotide sequence ID" value="XM_012964588.2"/>
</dbReference>
<dbReference type="FunCoup" id="Q5U4X7">
    <property type="interactions" value="3124"/>
</dbReference>
<dbReference type="STRING" id="8364.ENSXETP00000036627"/>
<dbReference type="PaxDb" id="8364-ENSXETP00000059411"/>
<dbReference type="DNASU" id="496578"/>
<dbReference type="GeneID" id="496578"/>
<dbReference type="KEGG" id="xtr:496578"/>
<dbReference type="AGR" id="Xenbase:XB-GENE-981846"/>
<dbReference type="CTD" id="64327"/>
<dbReference type="Xenbase" id="XB-GENE-981846">
    <property type="gene designation" value="lmbr1"/>
</dbReference>
<dbReference type="eggNOG" id="KOG3722">
    <property type="taxonomic scope" value="Eukaryota"/>
</dbReference>
<dbReference type="InParanoid" id="Q5U4X7"/>
<dbReference type="OMA" id="KSYYIQW"/>
<dbReference type="OrthoDB" id="5596951at2759"/>
<dbReference type="Proteomes" id="UP000008143">
    <property type="component" value="Chromosome 6"/>
</dbReference>
<dbReference type="Bgee" id="ENSXETG00000013512">
    <property type="expression patterns" value="Expressed in testis and 17 other cell types or tissues"/>
</dbReference>
<dbReference type="GO" id="GO:0016020">
    <property type="term" value="C:membrane"/>
    <property type="evidence" value="ECO:0007669"/>
    <property type="project" value="UniProtKB-SubCell"/>
</dbReference>
<dbReference type="InterPro" id="IPR008075">
    <property type="entry name" value="LIMR"/>
</dbReference>
<dbReference type="InterPro" id="IPR006876">
    <property type="entry name" value="LMBR1-like_membr_prot"/>
</dbReference>
<dbReference type="PANTHER" id="PTHR12625:SF1">
    <property type="entry name" value="LIMB REGION 1 PROTEIN HOMOLOG"/>
    <property type="match status" value="1"/>
</dbReference>
<dbReference type="PANTHER" id="PTHR12625">
    <property type="entry name" value="LIPOCALIN-1 INTERACTING MEMBRANE RECEPTOR LIMR"/>
    <property type="match status" value="1"/>
</dbReference>
<dbReference type="Pfam" id="PF04791">
    <property type="entry name" value="LMBR1"/>
    <property type="match status" value="2"/>
</dbReference>
<dbReference type="PRINTS" id="PR01692">
    <property type="entry name" value="LIPOCALINIMR"/>
</dbReference>
<accession>Q5U4X7</accession>
<sequence length="485" mass="54690">MEEDEVTIREQNFYSQVRECIICFLLFAILYIVSYFIIKRYKRKGDEQEDEDATVNRVSLFLCTFTLAVSGGAVLLLPFSIISNEILLCFPKSYYIQWLNGSLIHGLWNLVSLFSNLCLFVLMPFAFFFLESEGFAGLKKGIKARILETIIMLILLALLIFGIVWVASALIDNSSASMESLYDLWDCYLPYLYSCISLMGCLLLLLCTPVGLSRMFTVMGQLLVKPTILEDIDEQMYIISLQEEALQRKLNGGNYTADYSRKKIEHDLLNARSMKSKLERRKNASAWQRNLVYPAVMILLLIATFSSVILVSLNILRLLVDETAMPKGSKGSGFGDASLFTFGFAGATLEIILIFYLMVSSVVGFYSLRFFSSFTPRKDDTTMTKVIGNCLSILVLSSALPVMSRTLGITRFDLLGDFGRFNWLGNFYIVVAYNLMFAVMTTLCLVRKFTSAVREELLKAIGLDRLQLSNKSSDSPSPNGHQKSL</sequence>
<reference key="1">
    <citation type="submission" date="2004-10" db="EMBL/GenBank/DDBJ databases">
        <authorList>
            <consortium name="NIH - Xenopus Gene Collection (XGC) project"/>
        </authorList>
    </citation>
    <scope>NUCLEOTIDE SEQUENCE [LARGE SCALE MRNA]</scope>
    <source>
        <tissue>Embryo</tissue>
    </source>
</reference>
<name>LMBR1_XENTR</name>
<comment type="function">
    <text>Putative membrane receptor.</text>
</comment>
<comment type="subcellular location">
    <subcellularLocation>
        <location evidence="1">Membrane</location>
        <topology evidence="1">Multi-pass membrane protein</topology>
    </subcellularLocation>
</comment>
<comment type="similarity">
    <text evidence="3">Belongs to the LIMR family.</text>
</comment>
<proteinExistence type="evidence at transcript level"/>
<evidence type="ECO:0000250" key="1"/>
<evidence type="ECO:0000255" key="2"/>
<evidence type="ECO:0000305" key="3"/>
<protein>
    <recommendedName>
        <fullName>Limb region 1 protein homolog</fullName>
    </recommendedName>
</protein>
<feature type="chain" id="PRO_0000053909" description="Limb region 1 protein homolog">
    <location>
        <begin position="1"/>
        <end position="485"/>
    </location>
</feature>
<feature type="topological domain" description="Extracellular" evidence="2">
    <location>
        <begin position="1"/>
        <end position="18"/>
    </location>
</feature>
<feature type="transmembrane region" description="Helical" evidence="2">
    <location>
        <begin position="19"/>
        <end position="39"/>
    </location>
</feature>
<feature type="topological domain" description="Cytoplasmic" evidence="2">
    <location>
        <begin position="40"/>
        <end position="61"/>
    </location>
</feature>
<feature type="transmembrane region" description="Helical" evidence="2">
    <location>
        <begin position="62"/>
        <end position="82"/>
    </location>
</feature>
<feature type="topological domain" description="Extracellular" evidence="2">
    <location>
        <begin position="83"/>
        <end position="109"/>
    </location>
</feature>
<feature type="transmembrane region" description="Helical" evidence="2">
    <location>
        <begin position="110"/>
        <end position="130"/>
    </location>
</feature>
<feature type="topological domain" description="Cytoplasmic" evidence="2">
    <location>
        <begin position="131"/>
        <end position="149"/>
    </location>
</feature>
<feature type="transmembrane region" description="Helical" evidence="2">
    <location>
        <begin position="150"/>
        <end position="170"/>
    </location>
</feature>
<feature type="topological domain" description="Extracellular" evidence="2">
    <location>
        <begin position="171"/>
        <end position="191"/>
    </location>
</feature>
<feature type="transmembrane region" description="Helical" evidence="2">
    <location>
        <begin position="192"/>
        <end position="212"/>
    </location>
</feature>
<feature type="topological domain" description="Cytoplasmic" evidence="2">
    <location>
        <begin position="213"/>
        <end position="290"/>
    </location>
</feature>
<feature type="transmembrane region" description="Helical" evidence="2">
    <location>
        <begin position="291"/>
        <end position="311"/>
    </location>
</feature>
<feature type="topological domain" description="Extracellular" evidence="2">
    <location>
        <begin position="312"/>
        <end position="338"/>
    </location>
</feature>
<feature type="transmembrane region" description="Helical" evidence="2">
    <location>
        <begin position="339"/>
        <end position="359"/>
    </location>
</feature>
<feature type="topological domain" description="Cytoplasmic" evidence="2">
    <location>
        <begin position="360"/>
        <end position="382"/>
    </location>
</feature>
<feature type="transmembrane region" description="Helical" evidence="2">
    <location>
        <begin position="383"/>
        <end position="403"/>
    </location>
</feature>
<feature type="topological domain" description="Extracellular" evidence="2">
    <location>
        <begin position="404"/>
        <end position="425"/>
    </location>
</feature>
<feature type="transmembrane region" description="Helical" evidence="2">
    <location>
        <begin position="426"/>
        <end position="446"/>
    </location>
</feature>
<feature type="topological domain" description="Cytoplasmic" evidence="2">
    <location>
        <begin position="447"/>
        <end position="485"/>
    </location>
</feature>
<feature type="coiled-coil region" evidence="2">
    <location>
        <begin position="261"/>
        <end position="284"/>
    </location>
</feature>
<gene>
    <name type="primary">lmbr1</name>
</gene>
<keyword id="KW-0175">Coiled coil</keyword>
<keyword id="KW-0472">Membrane</keyword>
<keyword id="KW-0675">Receptor</keyword>
<keyword id="KW-1185">Reference proteome</keyword>
<keyword id="KW-0812">Transmembrane</keyword>
<keyword id="KW-1133">Transmembrane helix</keyword>